<protein>
    <recommendedName>
        <fullName evidence="1">Ribonuclease P protein component</fullName>
        <shortName evidence="1">RNase P protein</shortName>
        <shortName evidence="1">RNaseP protein</shortName>
        <ecNumber evidence="1">3.1.26.5</ecNumber>
    </recommendedName>
    <alternativeName>
        <fullName evidence="1">Protein C5</fullName>
    </alternativeName>
</protein>
<keyword id="KW-0255">Endonuclease</keyword>
<keyword id="KW-0378">Hydrolase</keyword>
<keyword id="KW-0540">Nuclease</keyword>
<keyword id="KW-0694">RNA-binding</keyword>
<keyword id="KW-0819">tRNA processing</keyword>
<organism>
    <name type="scientific">Borrelia recurrentis (strain A1)</name>
    <dbReference type="NCBI Taxonomy" id="412418"/>
    <lineage>
        <taxon>Bacteria</taxon>
        <taxon>Pseudomonadati</taxon>
        <taxon>Spirochaetota</taxon>
        <taxon>Spirochaetia</taxon>
        <taxon>Spirochaetales</taxon>
        <taxon>Borreliaceae</taxon>
        <taxon>Borrelia</taxon>
    </lineage>
</organism>
<gene>
    <name evidence="1" type="primary">rnpA</name>
    <name type="ordered locus">BRE_442</name>
</gene>
<proteinExistence type="inferred from homology"/>
<accession>B5RRP4</accession>
<evidence type="ECO:0000255" key="1">
    <source>
        <dbReference type="HAMAP-Rule" id="MF_00227"/>
    </source>
</evidence>
<name>RNPA_BORRA</name>
<feature type="chain" id="PRO_1000194615" description="Ribonuclease P protein component">
    <location>
        <begin position="1"/>
        <end position="114"/>
    </location>
</feature>
<reference key="1">
    <citation type="journal article" date="2008" name="PLoS Genet.">
        <title>The genome of Borrelia recurrentis, the agent of deadly louse-borne relapsing fever, is a degraded subset of tick-borne Borrelia duttonii.</title>
        <authorList>
            <person name="Lescot M."/>
            <person name="Audic S."/>
            <person name="Robert C."/>
            <person name="Nguyen T.T."/>
            <person name="Blanc G."/>
            <person name="Cutler S.J."/>
            <person name="Wincker P."/>
            <person name="Couloux A."/>
            <person name="Claverie J.-M."/>
            <person name="Raoult D."/>
            <person name="Drancourt M."/>
        </authorList>
    </citation>
    <scope>NUCLEOTIDE SEQUENCE [LARGE SCALE GENOMIC DNA]</scope>
    <source>
        <strain>A1</strain>
    </source>
</reference>
<sequence>MKKRNINIKSRLEIQELFKKGQFVKIEGINIFYRFTSLAISRILITFPRVFKGAVKRNRVRRVFKECFREYFTLLKDGCADFIFVVYPQKANINYHEVKTILKNMIVYVIKRKV</sequence>
<dbReference type="EC" id="3.1.26.5" evidence="1"/>
<dbReference type="EMBL" id="CP000993">
    <property type="protein sequence ID" value="ACH94678.1"/>
    <property type="molecule type" value="Genomic_DNA"/>
</dbReference>
<dbReference type="RefSeq" id="WP_012538195.1">
    <property type="nucleotide sequence ID" value="NZ_CP169983.1"/>
</dbReference>
<dbReference type="SMR" id="B5RRP4"/>
<dbReference type="KEGG" id="bre:BRE_442"/>
<dbReference type="HOGENOM" id="CLU_2116283_0_0_12"/>
<dbReference type="Proteomes" id="UP000000612">
    <property type="component" value="Chromosome"/>
</dbReference>
<dbReference type="GO" id="GO:0030677">
    <property type="term" value="C:ribonuclease P complex"/>
    <property type="evidence" value="ECO:0007669"/>
    <property type="project" value="TreeGrafter"/>
</dbReference>
<dbReference type="GO" id="GO:0042781">
    <property type="term" value="F:3'-tRNA processing endoribonuclease activity"/>
    <property type="evidence" value="ECO:0007669"/>
    <property type="project" value="TreeGrafter"/>
</dbReference>
<dbReference type="GO" id="GO:0004526">
    <property type="term" value="F:ribonuclease P activity"/>
    <property type="evidence" value="ECO:0007669"/>
    <property type="project" value="UniProtKB-UniRule"/>
</dbReference>
<dbReference type="GO" id="GO:0000049">
    <property type="term" value="F:tRNA binding"/>
    <property type="evidence" value="ECO:0007669"/>
    <property type="project" value="UniProtKB-UniRule"/>
</dbReference>
<dbReference type="GO" id="GO:0001682">
    <property type="term" value="P:tRNA 5'-leader removal"/>
    <property type="evidence" value="ECO:0007669"/>
    <property type="project" value="UniProtKB-UniRule"/>
</dbReference>
<dbReference type="Gene3D" id="3.30.230.10">
    <property type="match status" value="1"/>
</dbReference>
<dbReference type="HAMAP" id="MF_00227">
    <property type="entry name" value="RNase_P"/>
    <property type="match status" value="1"/>
</dbReference>
<dbReference type="InterPro" id="IPR020568">
    <property type="entry name" value="Ribosomal_Su5_D2-typ_SF"/>
</dbReference>
<dbReference type="InterPro" id="IPR014721">
    <property type="entry name" value="Ribsml_uS5_D2-typ_fold_subgr"/>
</dbReference>
<dbReference type="InterPro" id="IPR000100">
    <property type="entry name" value="RNase_P"/>
</dbReference>
<dbReference type="NCBIfam" id="TIGR00188">
    <property type="entry name" value="rnpA"/>
    <property type="match status" value="1"/>
</dbReference>
<dbReference type="PANTHER" id="PTHR33992">
    <property type="entry name" value="RIBONUCLEASE P PROTEIN COMPONENT"/>
    <property type="match status" value="1"/>
</dbReference>
<dbReference type="PANTHER" id="PTHR33992:SF1">
    <property type="entry name" value="RIBONUCLEASE P PROTEIN COMPONENT"/>
    <property type="match status" value="1"/>
</dbReference>
<dbReference type="Pfam" id="PF00825">
    <property type="entry name" value="Ribonuclease_P"/>
    <property type="match status" value="1"/>
</dbReference>
<dbReference type="SUPFAM" id="SSF54211">
    <property type="entry name" value="Ribosomal protein S5 domain 2-like"/>
    <property type="match status" value="1"/>
</dbReference>
<comment type="function">
    <text evidence="1">RNaseP catalyzes the removal of the 5'-leader sequence from pre-tRNA to produce the mature 5'-terminus. It can also cleave other RNA substrates such as 4.5S RNA. The protein component plays an auxiliary but essential role in vivo by binding to the 5'-leader sequence and broadening the substrate specificity of the ribozyme.</text>
</comment>
<comment type="catalytic activity">
    <reaction evidence="1">
        <text>Endonucleolytic cleavage of RNA, removing 5'-extranucleotides from tRNA precursor.</text>
        <dbReference type="EC" id="3.1.26.5"/>
    </reaction>
</comment>
<comment type="subunit">
    <text evidence="1">Consists of a catalytic RNA component (M1 or rnpB) and a protein subunit.</text>
</comment>
<comment type="similarity">
    <text evidence="1">Belongs to the RnpA family.</text>
</comment>